<organism>
    <name type="scientific">Synechococcus sp. (strain CC9605)</name>
    <dbReference type="NCBI Taxonomy" id="110662"/>
    <lineage>
        <taxon>Bacteria</taxon>
        <taxon>Bacillati</taxon>
        <taxon>Cyanobacteriota</taxon>
        <taxon>Cyanophyceae</taxon>
        <taxon>Synechococcales</taxon>
        <taxon>Synechococcaceae</taxon>
        <taxon>Synechococcus</taxon>
    </lineage>
</organism>
<evidence type="ECO:0000255" key="1">
    <source>
        <dbReference type="HAMAP-Rule" id="MF_00365"/>
    </source>
</evidence>
<accession>Q3AML2</accession>
<feature type="chain" id="PRO_0000236154" description="DNA replication and repair protein RecF">
    <location>
        <begin position="1"/>
        <end position="364"/>
    </location>
</feature>
<feature type="binding site" evidence="1">
    <location>
        <begin position="23"/>
        <end position="30"/>
    </location>
    <ligand>
        <name>ATP</name>
        <dbReference type="ChEBI" id="CHEBI:30616"/>
    </ligand>
</feature>
<dbReference type="EMBL" id="CP000110">
    <property type="protein sequence ID" value="ABB34170.1"/>
    <property type="molecule type" value="Genomic_DNA"/>
</dbReference>
<dbReference type="SMR" id="Q3AML2"/>
<dbReference type="STRING" id="110662.Syncc9605_0394"/>
<dbReference type="KEGG" id="syd:Syncc9605_0394"/>
<dbReference type="eggNOG" id="COG1195">
    <property type="taxonomic scope" value="Bacteria"/>
</dbReference>
<dbReference type="HOGENOM" id="CLU_040267_0_1_3"/>
<dbReference type="GO" id="GO:0005737">
    <property type="term" value="C:cytoplasm"/>
    <property type="evidence" value="ECO:0007669"/>
    <property type="project" value="UniProtKB-SubCell"/>
</dbReference>
<dbReference type="GO" id="GO:0005524">
    <property type="term" value="F:ATP binding"/>
    <property type="evidence" value="ECO:0007669"/>
    <property type="project" value="UniProtKB-UniRule"/>
</dbReference>
<dbReference type="GO" id="GO:0003697">
    <property type="term" value="F:single-stranded DNA binding"/>
    <property type="evidence" value="ECO:0007669"/>
    <property type="project" value="UniProtKB-UniRule"/>
</dbReference>
<dbReference type="GO" id="GO:0006260">
    <property type="term" value="P:DNA replication"/>
    <property type="evidence" value="ECO:0007669"/>
    <property type="project" value="UniProtKB-UniRule"/>
</dbReference>
<dbReference type="GO" id="GO:0000731">
    <property type="term" value="P:DNA synthesis involved in DNA repair"/>
    <property type="evidence" value="ECO:0007669"/>
    <property type="project" value="TreeGrafter"/>
</dbReference>
<dbReference type="GO" id="GO:0006302">
    <property type="term" value="P:double-strand break repair"/>
    <property type="evidence" value="ECO:0007669"/>
    <property type="project" value="TreeGrafter"/>
</dbReference>
<dbReference type="GO" id="GO:0009432">
    <property type="term" value="P:SOS response"/>
    <property type="evidence" value="ECO:0007669"/>
    <property type="project" value="UniProtKB-UniRule"/>
</dbReference>
<dbReference type="Gene3D" id="3.40.50.300">
    <property type="entry name" value="P-loop containing nucleotide triphosphate hydrolases"/>
    <property type="match status" value="1"/>
</dbReference>
<dbReference type="Gene3D" id="1.20.1050.90">
    <property type="entry name" value="RecF/RecN/SMC, N-terminal domain"/>
    <property type="match status" value="1"/>
</dbReference>
<dbReference type="HAMAP" id="MF_00365">
    <property type="entry name" value="RecF"/>
    <property type="match status" value="1"/>
</dbReference>
<dbReference type="InterPro" id="IPR001238">
    <property type="entry name" value="DNA-binding_RecF"/>
</dbReference>
<dbReference type="InterPro" id="IPR018078">
    <property type="entry name" value="DNA-binding_RecF_CS"/>
</dbReference>
<dbReference type="InterPro" id="IPR027417">
    <property type="entry name" value="P-loop_NTPase"/>
</dbReference>
<dbReference type="InterPro" id="IPR003395">
    <property type="entry name" value="RecF/RecN/SMC_N"/>
</dbReference>
<dbReference type="InterPro" id="IPR042174">
    <property type="entry name" value="RecF_2"/>
</dbReference>
<dbReference type="NCBIfam" id="TIGR00611">
    <property type="entry name" value="recf"/>
    <property type="match status" value="1"/>
</dbReference>
<dbReference type="PANTHER" id="PTHR32182">
    <property type="entry name" value="DNA REPLICATION AND REPAIR PROTEIN RECF"/>
    <property type="match status" value="1"/>
</dbReference>
<dbReference type="PANTHER" id="PTHR32182:SF0">
    <property type="entry name" value="DNA REPLICATION AND REPAIR PROTEIN RECF"/>
    <property type="match status" value="1"/>
</dbReference>
<dbReference type="Pfam" id="PF02463">
    <property type="entry name" value="SMC_N"/>
    <property type="match status" value="1"/>
</dbReference>
<dbReference type="SUPFAM" id="SSF52540">
    <property type="entry name" value="P-loop containing nucleoside triphosphate hydrolases"/>
    <property type="match status" value="1"/>
</dbReference>
<dbReference type="PROSITE" id="PS00617">
    <property type="entry name" value="RECF_1"/>
    <property type="match status" value="1"/>
</dbReference>
<dbReference type="PROSITE" id="PS00618">
    <property type="entry name" value="RECF_2"/>
    <property type="match status" value="1"/>
</dbReference>
<name>RECF_SYNSC</name>
<reference key="1">
    <citation type="submission" date="2005-07" db="EMBL/GenBank/DDBJ databases">
        <title>Complete sequence of Synechococcus sp. CC9605.</title>
        <authorList>
            <consortium name="US DOE Joint Genome Institute"/>
            <person name="Copeland A."/>
            <person name="Lucas S."/>
            <person name="Lapidus A."/>
            <person name="Barry K."/>
            <person name="Detter J.C."/>
            <person name="Glavina T."/>
            <person name="Hammon N."/>
            <person name="Israni S."/>
            <person name="Pitluck S."/>
            <person name="Schmutz J."/>
            <person name="Martinez M."/>
            <person name="Larimer F."/>
            <person name="Land M."/>
            <person name="Kyrpides N."/>
            <person name="Ivanova N."/>
            <person name="Richardson P."/>
        </authorList>
    </citation>
    <scope>NUCLEOTIDE SEQUENCE [LARGE SCALE GENOMIC DNA]</scope>
    <source>
        <strain>CC9605</strain>
    </source>
</reference>
<sequence length="364" mass="41268">MQGFRNHTVLQLELTQPRLLVIGPNGIGKSNLLEAVELLGSLRSHRCSNDRDLIQWDTPQALIRADVGDGDRLELELRRQGGRQARRNGKLLDRQLDLIGPLRCIGFSALDLDLVRGEPALRRQWLDRVVLQLEPVYADLMARLNRLLRQRSQLWRQRQISSGERHALLEAFDVQMALVSTRIHRRRQRALHRLEPIAQRWQTHLSGGTETLELHYKPGSRLDGEDAEEPWRLAIEEQLRQQREEEERLGSCRVGPHRDEIALLLGGSPARRFGSAGQQRSLVLGLKLAELELVTQLCGEPPLLLLDDVLAELDPTRQQLLLEAVGESHQCLVSATHLEGFGGGWQQQAQILGARELRPDLKIG</sequence>
<keyword id="KW-0067">ATP-binding</keyword>
<keyword id="KW-0963">Cytoplasm</keyword>
<keyword id="KW-0227">DNA damage</keyword>
<keyword id="KW-0234">DNA repair</keyword>
<keyword id="KW-0235">DNA replication</keyword>
<keyword id="KW-0238">DNA-binding</keyword>
<keyword id="KW-0547">Nucleotide-binding</keyword>
<keyword id="KW-0742">SOS response</keyword>
<proteinExistence type="inferred from homology"/>
<comment type="function">
    <text evidence="1">The RecF protein is involved in DNA metabolism; it is required for DNA replication and normal SOS inducibility. RecF binds preferentially to single-stranded, linear DNA. It also seems to bind ATP.</text>
</comment>
<comment type="subcellular location">
    <subcellularLocation>
        <location evidence="1">Cytoplasm</location>
    </subcellularLocation>
</comment>
<comment type="similarity">
    <text evidence="1">Belongs to the RecF family.</text>
</comment>
<gene>
    <name evidence="1" type="primary">recF</name>
    <name type="ordered locus">Syncc9605_0394</name>
</gene>
<protein>
    <recommendedName>
        <fullName evidence="1">DNA replication and repair protein RecF</fullName>
    </recommendedName>
</protein>